<dbReference type="EC" id="5.2.1.8"/>
<dbReference type="EMBL" id="U96925">
    <property type="protein sequence ID" value="AAB57848.1"/>
    <property type="molecule type" value="mRNA"/>
</dbReference>
<dbReference type="PIR" id="T12197">
    <property type="entry name" value="T12197"/>
</dbReference>
<dbReference type="SMR" id="O04287"/>
<dbReference type="EnsemblPlants" id="Vfaba.Hedin2.R1.1g484880.1">
    <property type="protein sequence ID" value="cds:Vfaba.Hedin2.R1.1g484880.1"/>
    <property type="gene ID" value="Vfaba.Hedin2.R1.1g484880"/>
</dbReference>
<dbReference type="Gramene" id="Vfaba.Hedin2.R1.1g484880.1">
    <property type="protein sequence ID" value="cds:Vfaba.Hedin2.R1.1g484880.1"/>
    <property type="gene ID" value="Vfaba.Hedin2.R1.1g484880"/>
</dbReference>
<dbReference type="OrthoDB" id="1902587at2759"/>
<dbReference type="GO" id="GO:0005737">
    <property type="term" value="C:cytoplasm"/>
    <property type="evidence" value="ECO:0007669"/>
    <property type="project" value="UniProtKB-SubCell"/>
</dbReference>
<dbReference type="GO" id="GO:0003755">
    <property type="term" value="F:peptidyl-prolyl cis-trans isomerase activity"/>
    <property type="evidence" value="ECO:0007669"/>
    <property type="project" value="UniProtKB-KW"/>
</dbReference>
<dbReference type="FunFam" id="3.10.50.40:FF:000031">
    <property type="entry name" value="Peptidylprolyl isomerase"/>
    <property type="match status" value="1"/>
</dbReference>
<dbReference type="Gene3D" id="3.10.50.40">
    <property type="match status" value="1"/>
</dbReference>
<dbReference type="InterPro" id="IPR050689">
    <property type="entry name" value="FKBP-type_PPIase"/>
</dbReference>
<dbReference type="InterPro" id="IPR046357">
    <property type="entry name" value="PPIase_dom_sf"/>
</dbReference>
<dbReference type="InterPro" id="IPR001179">
    <property type="entry name" value="PPIase_FKBP_dom"/>
</dbReference>
<dbReference type="PANTHER" id="PTHR10516:SF443">
    <property type="entry name" value="FK506-BINDING PROTEIN 59-RELATED"/>
    <property type="match status" value="1"/>
</dbReference>
<dbReference type="PANTHER" id="PTHR10516">
    <property type="entry name" value="PEPTIDYL-PROLYL CIS-TRANS ISOMERASE"/>
    <property type="match status" value="1"/>
</dbReference>
<dbReference type="Pfam" id="PF00254">
    <property type="entry name" value="FKBP_C"/>
    <property type="match status" value="1"/>
</dbReference>
<dbReference type="SUPFAM" id="SSF54534">
    <property type="entry name" value="FKBP-like"/>
    <property type="match status" value="1"/>
</dbReference>
<dbReference type="PROSITE" id="PS50059">
    <property type="entry name" value="FKBP_PPIASE"/>
    <property type="match status" value="1"/>
</dbReference>
<sequence length="112" mass="12101">MGVEKQIIRAGTGPNPSRGQNVTVHCTGYGKNGDLSQKFWSTKDPGQNPFTFKIGQGSVIKGWDEGVLGMQLGEVARLRCSPDYAYGAGGFPAWGIQPNSVLEFEIEVLRAQ</sequence>
<evidence type="ECO:0000250" key="1"/>
<evidence type="ECO:0000255" key="2">
    <source>
        <dbReference type="PROSITE-ProRule" id="PRU00277"/>
    </source>
</evidence>
<evidence type="ECO:0000256" key="3">
    <source>
        <dbReference type="SAM" id="MobiDB-lite"/>
    </source>
</evidence>
<evidence type="ECO:0000269" key="4">
    <source>
    </source>
</evidence>
<evidence type="ECO:0000305" key="5"/>
<proteinExistence type="evidence at protein level"/>
<organism>
    <name type="scientific">Vicia faba</name>
    <name type="common">Broad bean</name>
    <name type="synonym">Faba vulgaris</name>
    <dbReference type="NCBI Taxonomy" id="3906"/>
    <lineage>
        <taxon>Eukaryota</taxon>
        <taxon>Viridiplantae</taxon>
        <taxon>Streptophyta</taxon>
        <taxon>Embryophyta</taxon>
        <taxon>Tracheophyta</taxon>
        <taxon>Spermatophyta</taxon>
        <taxon>Magnoliopsida</taxon>
        <taxon>eudicotyledons</taxon>
        <taxon>Gunneridae</taxon>
        <taxon>Pentapetalae</taxon>
        <taxon>rosids</taxon>
        <taxon>fabids</taxon>
        <taxon>Fabales</taxon>
        <taxon>Fabaceae</taxon>
        <taxon>Papilionoideae</taxon>
        <taxon>50 kb inversion clade</taxon>
        <taxon>NPAAA clade</taxon>
        <taxon>Hologalegina</taxon>
        <taxon>IRL clade</taxon>
        <taxon>Fabeae</taxon>
        <taxon>Vicia</taxon>
    </lineage>
</organism>
<gene>
    <name type="primary">FKBP12</name>
</gene>
<protein>
    <recommendedName>
        <fullName>Peptidyl-prolyl cis-trans isomerase FKBP12</fullName>
        <shortName>PPIase FKBP12</shortName>
        <ecNumber>5.2.1.8</ecNumber>
    </recommendedName>
    <alternativeName>
        <fullName>12 kDa FK506-binding protein</fullName>
        <shortName>12 kDa FKBP</shortName>
    </alternativeName>
    <alternativeName>
        <fullName>FK506-binding protein 12</fullName>
        <shortName>VfFKBP12</shortName>
    </alternativeName>
    <alternativeName>
        <fullName>FKBP-12</fullName>
    </alternativeName>
    <alternativeName>
        <fullName>Immunophilin FKBP12</fullName>
    </alternativeName>
    <alternativeName>
        <fullName>Rotamase</fullName>
    </alternativeName>
</protein>
<comment type="function">
    <text evidence="1">PPIases accelerate the folding of proteins. It catalyzes the cis-trans isomerization of proline imidic peptide bonds in oligopeptides (By similarity).</text>
</comment>
<comment type="catalytic activity">
    <reaction>
        <text>[protein]-peptidylproline (omega=180) = [protein]-peptidylproline (omega=0)</text>
        <dbReference type="Rhea" id="RHEA:16237"/>
        <dbReference type="Rhea" id="RHEA-COMP:10747"/>
        <dbReference type="Rhea" id="RHEA-COMP:10748"/>
        <dbReference type="ChEBI" id="CHEBI:83833"/>
        <dbReference type="ChEBI" id="CHEBI:83834"/>
        <dbReference type="EC" id="5.2.1.8"/>
    </reaction>
</comment>
<comment type="subunit">
    <text evidence="4">Interacts with FK506.</text>
</comment>
<comment type="subcellular location">
    <subcellularLocation>
        <location evidence="5">Cytoplasm</location>
    </subcellularLocation>
</comment>
<comment type="similarity">
    <text evidence="5">Belongs to the FKBP-type PPIase family.</text>
</comment>
<name>FKB12_VICFA</name>
<feature type="chain" id="PRO_0000075301" description="Peptidyl-prolyl cis-trans isomerase FKBP12">
    <location>
        <begin position="1"/>
        <end position="112"/>
    </location>
</feature>
<feature type="domain" description="PPIase FKBP-type" evidence="2">
    <location>
        <begin position="19"/>
        <end position="112"/>
    </location>
</feature>
<feature type="region of interest" description="Disordered" evidence="3">
    <location>
        <begin position="1"/>
        <end position="22"/>
    </location>
</feature>
<feature type="disulfide bond" evidence="4">
    <location>
        <begin position="26"/>
        <end position="80"/>
    </location>
</feature>
<keyword id="KW-0963">Cytoplasm</keyword>
<keyword id="KW-1015">Disulfide bond</keyword>
<keyword id="KW-0413">Isomerase</keyword>
<keyword id="KW-0697">Rotamase</keyword>
<accession>O04287</accession>
<reference key="1">
    <citation type="journal article" date="1998" name="Plant J.">
        <title>Molecular characterization of a plant FKBP12 that does not mediate action of FK506 and rapamycin.</title>
        <authorList>
            <person name="Xu Q."/>
            <person name="Liang S."/>
            <person name="Kudla J."/>
            <person name="Luan S."/>
        </authorList>
    </citation>
    <scope>NUCLEOTIDE SEQUENCE [MRNA]</scope>
    <scope>DISULFIDE BOND</scope>
    <scope>INTERACTION WITH FK506</scope>
</reference>